<evidence type="ECO:0000250" key="1">
    <source>
        <dbReference type="UniProtKB" id="P0CX25"/>
    </source>
</evidence>
<evidence type="ECO:0000269" key="2">
    <source>
    </source>
</evidence>
<evidence type="ECO:0000305" key="3"/>
<organism>
    <name type="scientific">Schizosaccharomyces pombe (strain 972 / ATCC 24843)</name>
    <name type="common">Fission yeast</name>
    <dbReference type="NCBI Taxonomy" id="284812"/>
    <lineage>
        <taxon>Eukaryota</taxon>
        <taxon>Fungi</taxon>
        <taxon>Dikarya</taxon>
        <taxon>Ascomycota</taxon>
        <taxon>Taphrinomycotina</taxon>
        <taxon>Schizosaccharomycetes</taxon>
        <taxon>Schizosaccharomycetales</taxon>
        <taxon>Schizosaccharomycetaceae</taxon>
        <taxon>Schizosaccharomyces</taxon>
    </lineage>
</organism>
<keyword id="KW-0002">3D-structure</keyword>
<keyword id="KW-0963">Cytoplasm</keyword>
<keyword id="KW-0479">Metal-binding</keyword>
<keyword id="KW-1185">Reference proteome</keyword>
<keyword id="KW-0687">Ribonucleoprotein</keyword>
<keyword id="KW-0689">Ribosomal protein</keyword>
<keyword id="KW-0862">Zinc</keyword>
<keyword id="KW-0863">Zinc-finger</keyword>
<gene>
    <name type="primary">rpl4301</name>
    <name type="synonym">rpl43a</name>
    <name type="ORF">SPBC800.04c</name>
</gene>
<protein>
    <recommendedName>
        <fullName evidence="3">Large ribosomal subunit protein eL43A</fullName>
    </recommendedName>
    <alternativeName>
        <fullName>60S ribosomal protein L43-A</fullName>
    </alternativeName>
    <alternativeName>
        <fullName>L37A</fullName>
    </alternativeName>
</protein>
<feature type="chain" id="PRO_0000139836" description="Large ribosomal subunit protein eL43A">
    <location>
        <begin position="1"/>
        <end position="94"/>
    </location>
</feature>
<feature type="zinc finger region" description="C4-type">
    <location>
        <begin position="39"/>
        <end position="62"/>
    </location>
</feature>
<name>RL43A_SCHPO</name>
<comment type="function">
    <text evidence="1">Component of the ribosome, a large ribonucleoprotein complex responsible for the synthesis of proteins in the cell. The small ribosomal subunit (SSU) binds messenger RNAs (mRNAs) and translates the encoded message by selecting cognate aminoacyl-transfer RNA (tRNA) molecules. The large subunit (LSU) contains the ribosomal catalytic site termed the peptidyl transferase center (PTC), which catalyzes the formation of peptide bonds, thereby polymerizing the amino acids delivered by tRNAs into a polypeptide chain. The nascent polypeptides leave the ribosome through a tunnel in the LSU and interact with protein factors that function in enzymatic processing, targeting, and the membrane insertion of nascent chains at the exit of the ribosomal tunnel.</text>
</comment>
<comment type="subunit">
    <text evidence="1">Component of the large ribosomal subunit (LSU). Mature yeast ribosomes consist of a small (40S) and a large (60S) subunit. The 40S small subunit contains 1 molecule of ribosomal RNA (18S rRNA) and at least 33 different proteins. The large 60S subunit contains 3 rRNA molecules (25S, 5.8S and 5S rRNA) and at least 46 different proteins.</text>
</comment>
<comment type="subcellular location">
    <subcellularLocation>
        <location evidence="2">Cytoplasm</location>
    </subcellularLocation>
</comment>
<comment type="miscellaneous">
    <text>There are 2 genes for eL43 in S.pombe.</text>
</comment>
<comment type="similarity">
    <text evidence="3">Belongs to the eukaryotic ribosomal protein eL43 family.</text>
</comment>
<reference key="1">
    <citation type="journal article" date="2002" name="Nature">
        <title>The genome sequence of Schizosaccharomyces pombe.</title>
        <authorList>
            <person name="Wood V."/>
            <person name="Gwilliam R."/>
            <person name="Rajandream M.A."/>
            <person name="Lyne M.H."/>
            <person name="Lyne R."/>
            <person name="Stewart A."/>
            <person name="Sgouros J.G."/>
            <person name="Peat N."/>
            <person name="Hayles J."/>
            <person name="Baker S.G."/>
            <person name="Basham D."/>
            <person name="Bowman S."/>
            <person name="Brooks K."/>
            <person name="Brown D."/>
            <person name="Brown S."/>
            <person name="Chillingworth T."/>
            <person name="Churcher C.M."/>
            <person name="Collins M."/>
            <person name="Connor R."/>
            <person name="Cronin A."/>
            <person name="Davis P."/>
            <person name="Feltwell T."/>
            <person name="Fraser A."/>
            <person name="Gentles S."/>
            <person name="Goble A."/>
            <person name="Hamlin N."/>
            <person name="Harris D.E."/>
            <person name="Hidalgo J."/>
            <person name="Hodgson G."/>
            <person name="Holroyd S."/>
            <person name="Hornsby T."/>
            <person name="Howarth S."/>
            <person name="Huckle E.J."/>
            <person name="Hunt S."/>
            <person name="Jagels K."/>
            <person name="James K.D."/>
            <person name="Jones L."/>
            <person name="Jones M."/>
            <person name="Leather S."/>
            <person name="McDonald S."/>
            <person name="McLean J."/>
            <person name="Mooney P."/>
            <person name="Moule S."/>
            <person name="Mungall K.L."/>
            <person name="Murphy L.D."/>
            <person name="Niblett D."/>
            <person name="Odell C."/>
            <person name="Oliver K."/>
            <person name="O'Neil S."/>
            <person name="Pearson D."/>
            <person name="Quail M.A."/>
            <person name="Rabbinowitsch E."/>
            <person name="Rutherford K.M."/>
            <person name="Rutter S."/>
            <person name="Saunders D."/>
            <person name="Seeger K."/>
            <person name="Sharp S."/>
            <person name="Skelton J."/>
            <person name="Simmonds M.N."/>
            <person name="Squares R."/>
            <person name="Squares S."/>
            <person name="Stevens K."/>
            <person name="Taylor K."/>
            <person name="Taylor R.G."/>
            <person name="Tivey A."/>
            <person name="Walsh S.V."/>
            <person name="Warren T."/>
            <person name="Whitehead S."/>
            <person name="Woodward J.R."/>
            <person name="Volckaert G."/>
            <person name="Aert R."/>
            <person name="Robben J."/>
            <person name="Grymonprez B."/>
            <person name="Weltjens I."/>
            <person name="Vanstreels E."/>
            <person name="Rieger M."/>
            <person name="Schaefer M."/>
            <person name="Mueller-Auer S."/>
            <person name="Gabel C."/>
            <person name="Fuchs M."/>
            <person name="Duesterhoeft A."/>
            <person name="Fritzc C."/>
            <person name="Holzer E."/>
            <person name="Moestl D."/>
            <person name="Hilbert H."/>
            <person name="Borzym K."/>
            <person name="Langer I."/>
            <person name="Beck A."/>
            <person name="Lehrach H."/>
            <person name="Reinhardt R."/>
            <person name="Pohl T.M."/>
            <person name="Eger P."/>
            <person name="Zimmermann W."/>
            <person name="Wedler H."/>
            <person name="Wambutt R."/>
            <person name="Purnelle B."/>
            <person name="Goffeau A."/>
            <person name="Cadieu E."/>
            <person name="Dreano S."/>
            <person name="Gloux S."/>
            <person name="Lelaure V."/>
            <person name="Mottier S."/>
            <person name="Galibert F."/>
            <person name="Aves S.J."/>
            <person name="Xiang Z."/>
            <person name="Hunt C."/>
            <person name="Moore K."/>
            <person name="Hurst S.M."/>
            <person name="Lucas M."/>
            <person name="Rochet M."/>
            <person name="Gaillardin C."/>
            <person name="Tallada V.A."/>
            <person name="Garzon A."/>
            <person name="Thode G."/>
            <person name="Daga R.R."/>
            <person name="Cruzado L."/>
            <person name="Jimenez J."/>
            <person name="Sanchez M."/>
            <person name="del Rey F."/>
            <person name="Benito J."/>
            <person name="Dominguez A."/>
            <person name="Revuelta J.L."/>
            <person name="Moreno S."/>
            <person name="Armstrong J."/>
            <person name="Forsburg S.L."/>
            <person name="Cerutti L."/>
            <person name="Lowe T."/>
            <person name="McCombie W.R."/>
            <person name="Paulsen I."/>
            <person name="Potashkin J."/>
            <person name="Shpakovski G.V."/>
            <person name="Ussery D."/>
            <person name="Barrell B.G."/>
            <person name="Nurse P."/>
        </authorList>
    </citation>
    <scope>NUCLEOTIDE SEQUENCE [LARGE SCALE GENOMIC DNA]</scope>
    <source>
        <strain>972 / ATCC 24843</strain>
    </source>
</reference>
<reference key="2">
    <citation type="journal article" date="2006" name="Nat. Biotechnol.">
        <title>ORFeome cloning and global analysis of protein localization in the fission yeast Schizosaccharomyces pombe.</title>
        <authorList>
            <person name="Matsuyama A."/>
            <person name="Arai R."/>
            <person name="Yashiroda Y."/>
            <person name="Shirai A."/>
            <person name="Kamata A."/>
            <person name="Sekido S."/>
            <person name="Kobayashi Y."/>
            <person name="Hashimoto A."/>
            <person name="Hamamoto M."/>
            <person name="Hiraoka Y."/>
            <person name="Horinouchi S."/>
            <person name="Yoshida M."/>
        </authorList>
    </citation>
    <scope>SUBCELLULAR LOCATION [LARGE SCALE ANALYSIS]</scope>
</reference>
<accession>Q9HGL8</accession>
<sequence length="94" mass="10422">MTKRTKKVGVTGKYGVRYGASLRRDVRKIEVQQHSRYQCPFCGRNTVKRTAAGIWCCNGKGCKKVLAGGAWTVTTAAATSARSTIRRLREMVEV</sequence>
<dbReference type="EMBL" id="CU329671">
    <property type="protein sequence ID" value="CAC01519.1"/>
    <property type="molecule type" value="Genomic_DNA"/>
</dbReference>
<dbReference type="RefSeq" id="NP_595105.1">
    <property type="nucleotide sequence ID" value="NM_001021012.2"/>
</dbReference>
<dbReference type="PDB" id="8EUG">
    <property type="method" value="EM"/>
    <property type="resolution" value="2.80 A"/>
    <property type="chains" value="K=1-94"/>
</dbReference>
<dbReference type="PDB" id="8EUI">
    <property type="method" value="EM"/>
    <property type="resolution" value="3.10 A"/>
    <property type="chains" value="K=1-94"/>
</dbReference>
<dbReference type="PDB" id="9AXT">
    <property type="method" value="EM"/>
    <property type="resolution" value="2.40 A"/>
    <property type="chains" value="B1=1-94"/>
</dbReference>
<dbReference type="PDB" id="9AXU">
    <property type="method" value="EM"/>
    <property type="resolution" value="1.94 A"/>
    <property type="chains" value="1=1-94"/>
</dbReference>
<dbReference type="PDB" id="9AXV">
    <property type="method" value="EM"/>
    <property type="resolution" value="2.40 A"/>
    <property type="chains" value="B1=1-94"/>
</dbReference>
<dbReference type="PDBsum" id="8EUG"/>
<dbReference type="PDBsum" id="8EUI"/>
<dbReference type="PDBsum" id="9AXT"/>
<dbReference type="PDBsum" id="9AXU"/>
<dbReference type="PDBsum" id="9AXV"/>
<dbReference type="EMDB" id="EMD-43972"/>
<dbReference type="EMDB" id="EMD-43973"/>
<dbReference type="EMDB" id="EMD-43976"/>
<dbReference type="SMR" id="Q9HGL8"/>
<dbReference type="BioGRID" id="277207">
    <property type="interactions" value="5"/>
</dbReference>
<dbReference type="FunCoup" id="Q9HGL8">
    <property type="interactions" value="582"/>
</dbReference>
<dbReference type="IntAct" id="Q9HGL8">
    <property type="interactions" value="1"/>
</dbReference>
<dbReference type="STRING" id="284812.Q9HGL8"/>
<dbReference type="iPTMnet" id="Q9HGL8"/>
<dbReference type="PaxDb" id="4896-SPBC800.04c.1"/>
<dbReference type="EnsemblFungi" id="SPBC800.04c.1">
    <property type="protein sequence ID" value="SPBC800.04c.1:pep"/>
    <property type="gene ID" value="SPBC800.04c"/>
</dbReference>
<dbReference type="GeneID" id="2540682"/>
<dbReference type="KEGG" id="spo:2540682"/>
<dbReference type="PomBase" id="SPBC800.04c">
    <property type="gene designation" value="rpl4301"/>
</dbReference>
<dbReference type="VEuPathDB" id="FungiDB:SPBC800.04c"/>
<dbReference type="eggNOG" id="KOG0402">
    <property type="taxonomic scope" value="Eukaryota"/>
</dbReference>
<dbReference type="HOGENOM" id="CLU_141199_1_0_1"/>
<dbReference type="InParanoid" id="Q9HGL8"/>
<dbReference type="OMA" id="GPRYGRK"/>
<dbReference type="PRO" id="PR:Q9HGL8"/>
<dbReference type="Proteomes" id="UP000002485">
    <property type="component" value="Chromosome II"/>
</dbReference>
<dbReference type="GO" id="GO:0005829">
    <property type="term" value="C:cytosol"/>
    <property type="evidence" value="ECO:0007005"/>
    <property type="project" value="PomBase"/>
</dbReference>
<dbReference type="GO" id="GO:0022625">
    <property type="term" value="C:cytosolic large ribosomal subunit"/>
    <property type="evidence" value="ECO:0000269"/>
    <property type="project" value="PomBase"/>
</dbReference>
<dbReference type="GO" id="GO:0003735">
    <property type="term" value="F:structural constituent of ribosome"/>
    <property type="evidence" value="ECO:0000266"/>
    <property type="project" value="PomBase"/>
</dbReference>
<dbReference type="GO" id="GO:0008270">
    <property type="term" value="F:zinc ion binding"/>
    <property type="evidence" value="ECO:0007669"/>
    <property type="project" value="UniProtKB-KW"/>
</dbReference>
<dbReference type="GO" id="GO:0002181">
    <property type="term" value="P:cytoplasmic translation"/>
    <property type="evidence" value="ECO:0000266"/>
    <property type="project" value="PomBase"/>
</dbReference>
<dbReference type="FunFam" id="2.20.25.30:FF:000002">
    <property type="entry name" value="60S ribosomal protein L37a"/>
    <property type="match status" value="1"/>
</dbReference>
<dbReference type="Gene3D" id="2.20.25.30">
    <property type="match status" value="1"/>
</dbReference>
<dbReference type="HAMAP" id="MF_00327">
    <property type="entry name" value="Ribosomal_eL43"/>
    <property type="match status" value="1"/>
</dbReference>
<dbReference type="InterPro" id="IPR011331">
    <property type="entry name" value="Ribosomal_eL37/eL43"/>
</dbReference>
<dbReference type="InterPro" id="IPR002674">
    <property type="entry name" value="Ribosomal_eL43"/>
</dbReference>
<dbReference type="InterPro" id="IPR050522">
    <property type="entry name" value="Ribosomal_protein_eL43"/>
</dbReference>
<dbReference type="InterPro" id="IPR011332">
    <property type="entry name" value="Ribosomal_zn-bd"/>
</dbReference>
<dbReference type="NCBIfam" id="TIGR00280">
    <property type="entry name" value="eL43_euk_arch"/>
    <property type="match status" value="1"/>
</dbReference>
<dbReference type="PANTHER" id="PTHR48129">
    <property type="entry name" value="60S RIBOSOMAL PROTEIN L37A"/>
    <property type="match status" value="1"/>
</dbReference>
<dbReference type="PANTHER" id="PTHR48129:SF1">
    <property type="entry name" value="LARGE RIBOSOMAL SUBUNIT PROTEIN EL43"/>
    <property type="match status" value="1"/>
</dbReference>
<dbReference type="Pfam" id="PF01780">
    <property type="entry name" value="Ribosomal_L37ae"/>
    <property type="match status" value="1"/>
</dbReference>
<dbReference type="SUPFAM" id="SSF57829">
    <property type="entry name" value="Zn-binding ribosomal proteins"/>
    <property type="match status" value="1"/>
</dbReference>
<proteinExistence type="evidence at protein level"/>